<feature type="chain" id="PRO_0000258116" description="Leucyl/phenylalanyl-tRNA--protein transferase">
    <location>
        <begin position="1"/>
        <end position="268"/>
    </location>
</feature>
<proteinExistence type="inferred from homology"/>
<organism>
    <name type="scientific">Zymomonas mobilis subsp. mobilis (strain ATCC 31821 / ZM4 / CP4)</name>
    <dbReference type="NCBI Taxonomy" id="264203"/>
    <lineage>
        <taxon>Bacteria</taxon>
        <taxon>Pseudomonadati</taxon>
        <taxon>Pseudomonadota</taxon>
        <taxon>Alphaproteobacteria</taxon>
        <taxon>Sphingomonadales</taxon>
        <taxon>Zymomonadaceae</taxon>
        <taxon>Zymomonas</taxon>
    </lineage>
</organism>
<comment type="function">
    <text evidence="1">Functions in the N-end rule pathway of protein degradation where it conjugates Leu, Phe and, less efficiently, Met from aminoacyl-tRNAs to the N-termini of proteins containing an N-terminal arginine or lysine.</text>
</comment>
<comment type="catalytic activity">
    <reaction evidence="1">
        <text>N-terminal L-lysyl-[protein] + L-leucyl-tRNA(Leu) = N-terminal L-leucyl-L-lysyl-[protein] + tRNA(Leu) + H(+)</text>
        <dbReference type="Rhea" id="RHEA:12340"/>
        <dbReference type="Rhea" id="RHEA-COMP:9613"/>
        <dbReference type="Rhea" id="RHEA-COMP:9622"/>
        <dbReference type="Rhea" id="RHEA-COMP:12670"/>
        <dbReference type="Rhea" id="RHEA-COMP:12671"/>
        <dbReference type="ChEBI" id="CHEBI:15378"/>
        <dbReference type="ChEBI" id="CHEBI:65249"/>
        <dbReference type="ChEBI" id="CHEBI:78442"/>
        <dbReference type="ChEBI" id="CHEBI:78494"/>
        <dbReference type="ChEBI" id="CHEBI:133043"/>
        <dbReference type="EC" id="2.3.2.6"/>
    </reaction>
</comment>
<comment type="catalytic activity">
    <reaction evidence="1">
        <text>N-terminal L-arginyl-[protein] + L-leucyl-tRNA(Leu) = N-terminal L-leucyl-L-arginyl-[protein] + tRNA(Leu) + H(+)</text>
        <dbReference type="Rhea" id="RHEA:50416"/>
        <dbReference type="Rhea" id="RHEA-COMP:9613"/>
        <dbReference type="Rhea" id="RHEA-COMP:9622"/>
        <dbReference type="Rhea" id="RHEA-COMP:12672"/>
        <dbReference type="Rhea" id="RHEA-COMP:12673"/>
        <dbReference type="ChEBI" id="CHEBI:15378"/>
        <dbReference type="ChEBI" id="CHEBI:64719"/>
        <dbReference type="ChEBI" id="CHEBI:78442"/>
        <dbReference type="ChEBI" id="CHEBI:78494"/>
        <dbReference type="ChEBI" id="CHEBI:133044"/>
        <dbReference type="EC" id="2.3.2.6"/>
    </reaction>
</comment>
<comment type="catalytic activity">
    <reaction evidence="1">
        <text>L-phenylalanyl-tRNA(Phe) + an N-terminal L-alpha-aminoacyl-[protein] = an N-terminal L-phenylalanyl-L-alpha-aminoacyl-[protein] + tRNA(Phe)</text>
        <dbReference type="Rhea" id="RHEA:43632"/>
        <dbReference type="Rhea" id="RHEA-COMP:9668"/>
        <dbReference type="Rhea" id="RHEA-COMP:9699"/>
        <dbReference type="Rhea" id="RHEA-COMP:10636"/>
        <dbReference type="Rhea" id="RHEA-COMP:10637"/>
        <dbReference type="ChEBI" id="CHEBI:78442"/>
        <dbReference type="ChEBI" id="CHEBI:78531"/>
        <dbReference type="ChEBI" id="CHEBI:78597"/>
        <dbReference type="ChEBI" id="CHEBI:83561"/>
        <dbReference type="EC" id="2.3.2.6"/>
    </reaction>
</comment>
<comment type="subcellular location">
    <subcellularLocation>
        <location evidence="1">Cytoplasm</location>
    </subcellularLocation>
</comment>
<comment type="similarity">
    <text evidence="1">Belongs to the L/F-transferase family.</text>
</comment>
<name>LFTR_ZYMMO</name>
<gene>
    <name evidence="1" type="primary">aat</name>
    <name type="ordered locus">ZMO0927</name>
</gene>
<protein>
    <recommendedName>
        <fullName evidence="1">Leucyl/phenylalanyl-tRNA--protein transferase</fullName>
        <ecNumber evidence="1">2.3.2.6</ecNumber>
    </recommendedName>
    <alternativeName>
        <fullName evidence="1">L/F-transferase</fullName>
    </alternativeName>
    <alternativeName>
        <fullName evidence="1">Leucyltransferase</fullName>
    </alternativeName>
    <alternativeName>
        <fullName evidence="1">Phenyalanyltransferase</fullName>
    </alternativeName>
</protein>
<dbReference type="EC" id="2.3.2.6" evidence="1"/>
<dbReference type="EMBL" id="AE008692">
    <property type="protein sequence ID" value="AAV89551.1"/>
    <property type="molecule type" value="Genomic_DNA"/>
</dbReference>
<dbReference type="RefSeq" id="WP_011240787.1">
    <property type="nucleotide sequence ID" value="NZ_CP035711.1"/>
</dbReference>
<dbReference type="SMR" id="Q5NP09"/>
<dbReference type="STRING" id="264203.ZMO0927"/>
<dbReference type="KEGG" id="zmo:ZMO0927"/>
<dbReference type="eggNOG" id="COG2360">
    <property type="taxonomic scope" value="Bacteria"/>
</dbReference>
<dbReference type="HOGENOM" id="CLU_075045_1_0_5"/>
<dbReference type="Proteomes" id="UP000001173">
    <property type="component" value="Chromosome"/>
</dbReference>
<dbReference type="GO" id="GO:0005737">
    <property type="term" value="C:cytoplasm"/>
    <property type="evidence" value="ECO:0007669"/>
    <property type="project" value="UniProtKB-SubCell"/>
</dbReference>
<dbReference type="GO" id="GO:0008914">
    <property type="term" value="F:leucyl-tRNA--protein transferase activity"/>
    <property type="evidence" value="ECO:0007669"/>
    <property type="project" value="UniProtKB-UniRule"/>
</dbReference>
<dbReference type="GO" id="GO:0030163">
    <property type="term" value="P:protein catabolic process"/>
    <property type="evidence" value="ECO:0007669"/>
    <property type="project" value="UniProtKB-UniRule"/>
</dbReference>
<dbReference type="FunFam" id="3.40.630.70:FF:000001">
    <property type="entry name" value="Leucyl/phenylalanyl-tRNA--protein transferase"/>
    <property type="match status" value="1"/>
</dbReference>
<dbReference type="Gene3D" id="3.40.630.70">
    <property type="entry name" value="Leucyl/phenylalanyl-tRNA-protein transferase, C-terminal domain"/>
    <property type="match status" value="1"/>
</dbReference>
<dbReference type="HAMAP" id="MF_00688">
    <property type="entry name" value="Leu_Phe_trans"/>
    <property type="match status" value="1"/>
</dbReference>
<dbReference type="InterPro" id="IPR016181">
    <property type="entry name" value="Acyl_CoA_acyltransferase"/>
</dbReference>
<dbReference type="InterPro" id="IPR004616">
    <property type="entry name" value="Leu/Phe-tRNA_Trfase"/>
</dbReference>
<dbReference type="InterPro" id="IPR042203">
    <property type="entry name" value="Leu/Phe-tRNA_Trfase_C"/>
</dbReference>
<dbReference type="NCBIfam" id="TIGR00667">
    <property type="entry name" value="aat"/>
    <property type="match status" value="1"/>
</dbReference>
<dbReference type="PANTHER" id="PTHR30098">
    <property type="entry name" value="LEUCYL/PHENYLALANYL-TRNA--PROTEIN TRANSFERASE"/>
    <property type="match status" value="1"/>
</dbReference>
<dbReference type="PANTHER" id="PTHR30098:SF2">
    <property type="entry name" value="LEUCYL_PHENYLALANYL-TRNA--PROTEIN TRANSFERASE"/>
    <property type="match status" value="1"/>
</dbReference>
<dbReference type="Pfam" id="PF03588">
    <property type="entry name" value="Leu_Phe_trans"/>
    <property type="match status" value="1"/>
</dbReference>
<dbReference type="SUPFAM" id="SSF55729">
    <property type="entry name" value="Acyl-CoA N-acyltransferases (Nat)"/>
    <property type="match status" value="1"/>
</dbReference>
<accession>Q5NP09</accession>
<sequence length="268" mass="29930">MTNMIDPHLLLSAYATGIFPMSDSRETDEVYWVEPKKRGILPPDHFHLSRSLAKIIRSDRFLVTADRDFEAVIDLCAEPTEDRPDSWINPPIRAAYCQLHNLGYAHSIECWLDNRLVGGLYGVNLGYAFFGESMFSRVSNASKVALAWLVARLKVGNFSLLDCQFITDHLASMGAIEITREDYLKRLKSAVSSYFTDKETGNWNTLDRLSPLLHNKHSKTKENQFADADLPFTEGIALETDGTAPGEASFSLACPNGARIVQLLGQIS</sequence>
<keyword id="KW-0012">Acyltransferase</keyword>
<keyword id="KW-0963">Cytoplasm</keyword>
<keyword id="KW-1185">Reference proteome</keyword>
<keyword id="KW-0808">Transferase</keyword>
<reference key="1">
    <citation type="journal article" date="2005" name="Nat. Biotechnol.">
        <title>The genome sequence of the ethanologenic bacterium Zymomonas mobilis ZM4.</title>
        <authorList>
            <person name="Seo J.-S."/>
            <person name="Chong H."/>
            <person name="Park H.S."/>
            <person name="Yoon K.-O."/>
            <person name="Jung C."/>
            <person name="Kim J.J."/>
            <person name="Hong J.H."/>
            <person name="Kim H."/>
            <person name="Kim J.-H."/>
            <person name="Kil J.-I."/>
            <person name="Park C.J."/>
            <person name="Oh H.-M."/>
            <person name="Lee J.-S."/>
            <person name="Jin S.-J."/>
            <person name="Um H.-W."/>
            <person name="Lee H.-J."/>
            <person name="Oh S.-J."/>
            <person name="Kim J.Y."/>
            <person name="Kang H.L."/>
            <person name="Lee S.Y."/>
            <person name="Lee K.J."/>
            <person name="Kang H.S."/>
        </authorList>
    </citation>
    <scope>NUCLEOTIDE SEQUENCE [LARGE SCALE GENOMIC DNA]</scope>
    <source>
        <strain>ATCC 31821 / ZM4 / CP4</strain>
    </source>
</reference>
<evidence type="ECO:0000255" key="1">
    <source>
        <dbReference type="HAMAP-Rule" id="MF_00688"/>
    </source>
</evidence>